<reference key="1">
    <citation type="journal article" date="2006" name="J. Bacteriol.">
        <title>Comparative genomic analysis of three strains of Ehrlichia ruminantium reveals an active process of genome size plasticity.</title>
        <authorList>
            <person name="Frutos R."/>
            <person name="Viari A."/>
            <person name="Ferraz C."/>
            <person name="Morgat A."/>
            <person name="Eychenie S."/>
            <person name="Kandassamy Y."/>
            <person name="Chantal I."/>
            <person name="Bensaid A."/>
            <person name="Coissac E."/>
            <person name="Vachiery N."/>
            <person name="Demaille J."/>
            <person name="Martinez D."/>
        </authorList>
    </citation>
    <scope>NUCLEOTIDE SEQUENCE [LARGE SCALE GENOMIC DNA]</scope>
    <source>
        <strain>Gardel</strain>
    </source>
</reference>
<sequence>MLDDFKIDLLVKNKPPTSTTAVVAMSGGVDSSVAAALLHKLGYKVIGITLQLYNNNKNSNTKGACCGSLDTKDAKQVASSMGFPHYTLNYEKVFREEVIEDFIDTYTQGKTPIPCIKCNQVIKFRDLLNATKSLGADVLVTGHYIRKIEQDDDIYVYSSKDTKKDQSYFLFATTVEQLRLLRFPLGNFHKEDIRKLAKYFNLQVANKPDSQNICFVTDTYKKTIAELRPHTIKKGNIIDINGNILSQHNGIVNFTIGQRKGIGISSKAPLYVIKLNPDTNEVTVGPKSALLQNKLYIREINWLAKEKIPHNGLNVKVKLRSSHSGSPATIFPNNNNTATILLQDSYCTVTPGQACVIYDHDRMLGGGWIC</sequence>
<evidence type="ECO:0000255" key="1">
    <source>
        <dbReference type="HAMAP-Rule" id="MF_00144"/>
    </source>
</evidence>
<dbReference type="EC" id="2.8.1.13" evidence="1"/>
<dbReference type="EMBL" id="CR925677">
    <property type="protein sequence ID" value="CAI27673.1"/>
    <property type="molecule type" value="Genomic_DNA"/>
</dbReference>
<dbReference type="RefSeq" id="WP_011255387.1">
    <property type="nucleotide sequence ID" value="NC_006831.1"/>
</dbReference>
<dbReference type="SMR" id="Q5FFJ0"/>
<dbReference type="KEGG" id="erg:ERGA_CDS_02210"/>
<dbReference type="HOGENOM" id="CLU_035188_0_1_5"/>
<dbReference type="OrthoDB" id="9800696at2"/>
<dbReference type="Proteomes" id="UP000000533">
    <property type="component" value="Chromosome"/>
</dbReference>
<dbReference type="GO" id="GO:0005737">
    <property type="term" value="C:cytoplasm"/>
    <property type="evidence" value="ECO:0007669"/>
    <property type="project" value="UniProtKB-SubCell"/>
</dbReference>
<dbReference type="GO" id="GO:0005524">
    <property type="term" value="F:ATP binding"/>
    <property type="evidence" value="ECO:0007669"/>
    <property type="project" value="UniProtKB-KW"/>
</dbReference>
<dbReference type="GO" id="GO:0000049">
    <property type="term" value="F:tRNA binding"/>
    <property type="evidence" value="ECO:0007669"/>
    <property type="project" value="UniProtKB-KW"/>
</dbReference>
<dbReference type="GO" id="GO:0103016">
    <property type="term" value="F:tRNA-uridine 2-sulfurtransferase activity"/>
    <property type="evidence" value="ECO:0007669"/>
    <property type="project" value="UniProtKB-EC"/>
</dbReference>
<dbReference type="GO" id="GO:0002143">
    <property type="term" value="P:tRNA wobble position uridine thiolation"/>
    <property type="evidence" value="ECO:0007669"/>
    <property type="project" value="TreeGrafter"/>
</dbReference>
<dbReference type="CDD" id="cd01998">
    <property type="entry name" value="MnmA_TRMU-like"/>
    <property type="match status" value="1"/>
</dbReference>
<dbReference type="FunFam" id="2.30.30.280:FF:000001">
    <property type="entry name" value="tRNA-specific 2-thiouridylase MnmA"/>
    <property type="match status" value="1"/>
</dbReference>
<dbReference type="FunFam" id="3.40.50.620:FF:000115">
    <property type="entry name" value="tRNA-specific 2-thiouridylase MnmA"/>
    <property type="match status" value="1"/>
</dbReference>
<dbReference type="Gene3D" id="2.30.30.280">
    <property type="entry name" value="Adenine nucleotide alpha hydrolases-like domains"/>
    <property type="match status" value="1"/>
</dbReference>
<dbReference type="Gene3D" id="3.40.50.620">
    <property type="entry name" value="HUPs"/>
    <property type="match status" value="1"/>
</dbReference>
<dbReference type="Gene3D" id="2.40.30.10">
    <property type="entry name" value="Translation factors"/>
    <property type="match status" value="1"/>
</dbReference>
<dbReference type="HAMAP" id="MF_00144">
    <property type="entry name" value="tRNA_thiouridyl_MnmA"/>
    <property type="match status" value="1"/>
</dbReference>
<dbReference type="InterPro" id="IPR004506">
    <property type="entry name" value="MnmA-like"/>
</dbReference>
<dbReference type="InterPro" id="IPR046885">
    <property type="entry name" value="MnmA-like_C"/>
</dbReference>
<dbReference type="InterPro" id="IPR046884">
    <property type="entry name" value="MnmA-like_central"/>
</dbReference>
<dbReference type="InterPro" id="IPR023382">
    <property type="entry name" value="MnmA-like_central_sf"/>
</dbReference>
<dbReference type="InterPro" id="IPR014729">
    <property type="entry name" value="Rossmann-like_a/b/a_fold"/>
</dbReference>
<dbReference type="NCBIfam" id="NF001138">
    <property type="entry name" value="PRK00143.1"/>
    <property type="match status" value="1"/>
</dbReference>
<dbReference type="NCBIfam" id="TIGR00420">
    <property type="entry name" value="trmU"/>
    <property type="match status" value="1"/>
</dbReference>
<dbReference type="PANTHER" id="PTHR11933:SF5">
    <property type="entry name" value="MITOCHONDRIAL TRNA-SPECIFIC 2-THIOURIDYLASE 1"/>
    <property type="match status" value="1"/>
</dbReference>
<dbReference type="PANTHER" id="PTHR11933">
    <property type="entry name" value="TRNA 5-METHYLAMINOMETHYL-2-THIOURIDYLATE -METHYLTRANSFERASE"/>
    <property type="match status" value="1"/>
</dbReference>
<dbReference type="Pfam" id="PF03054">
    <property type="entry name" value="tRNA_Me_trans"/>
    <property type="match status" value="1"/>
</dbReference>
<dbReference type="Pfam" id="PF20258">
    <property type="entry name" value="tRNA_Me_trans_C"/>
    <property type="match status" value="1"/>
</dbReference>
<dbReference type="Pfam" id="PF20259">
    <property type="entry name" value="tRNA_Me_trans_M"/>
    <property type="match status" value="1"/>
</dbReference>
<dbReference type="SUPFAM" id="SSF52402">
    <property type="entry name" value="Adenine nucleotide alpha hydrolases-like"/>
    <property type="match status" value="1"/>
</dbReference>
<name>MNMA_EHRRG</name>
<comment type="function">
    <text evidence="1">Catalyzes the 2-thiolation of uridine at the wobble position (U34) of tRNA, leading to the formation of s(2)U34.</text>
</comment>
<comment type="catalytic activity">
    <reaction evidence="1">
        <text>S-sulfanyl-L-cysteinyl-[protein] + uridine(34) in tRNA + AH2 + ATP = 2-thiouridine(34) in tRNA + L-cysteinyl-[protein] + A + AMP + diphosphate + H(+)</text>
        <dbReference type="Rhea" id="RHEA:47032"/>
        <dbReference type="Rhea" id="RHEA-COMP:10131"/>
        <dbReference type="Rhea" id="RHEA-COMP:11726"/>
        <dbReference type="Rhea" id="RHEA-COMP:11727"/>
        <dbReference type="Rhea" id="RHEA-COMP:11728"/>
        <dbReference type="ChEBI" id="CHEBI:13193"/>
        <dbReference type="ChEBI" id="CHEBI:15378"/>
        <dbReference type="ChEBI" id="CHEBI:17499"/>
        <dbReference type="ChEBI" id="CHEBI:29950"/>
        <dbReference type="ChEBI" id="CHEBI:30616"/>
        <dbReference type="ChEBI" id="CHEBI:33019"/>
        <dbReference type="ChEBI" id="CHEBI:61963"/>
        <dbReference type="ChEBI" id="CHEBI:65315"/>
        <dbReference type="ChEBI" id="CHEBI:87170"/>
        <dbReference type="ChEBI" id="CHEBI:456215"/>
        <dbReference type="EC" id="2.8.1.13"/>
    </reaction>
</comment>
<comment type="subcellular location">
    <subcellularLocation>
        <location evidence="1">Cytoplasm</location>
    </subcellularLocation>
</comment>
<comment type="similarity">
    <text evidence="1">Belongs to the MnmA/TRMU family.</text>
</comment>
<gene>
    <name evidence="1" type="primary">mnmA</name>
    <name type="ordered locus">ERGA_CDS_02210</name>
</gene>
<feature type="chain" id="PRO_0000349622" description="tRNA-specific 2-thiouridylase MnmA">
    <location>
        <begin position="1"/>
        <end position="370"/>
    </location>
</feature>
<feature type="region of interest" description="Interaction with tRNA" evidence="1">
    <location>
        <begin position="164"/>
        <end position="166"/>
    </location>
</feature>
<feature type="active site" description="Nucleophile" evidence="1">
    <location>
        <position position="118"/>
    </location>
</feature>
<feature type="active site" description="Cysteine persulfide intermediate" evidence="1">
    <location>
        <position position="214"/>
    </location>
</feature>
<feature type="binding site" evidence="1">
    <location>
        <begin position="24"/>
        <end position="31"/>
    </location>
    <ligand>
        <name>ATP</name>
        <dbReference type="ChEBI" id="CHEBI:30616"/>
    </ligand>
</feature>
<feature type="binding site" evidence="1">
    <location>
        <position position="50"/>
    </location>
    <ligand>
        <name>ATP</name>
        <dbReference type="ChEBI" id="CHEBI:30616"/>
    </ligand>
</feature>
<feature type="binding site" evidence="1">
    <location>
        <position position="142"/>
    </location>
    <ligand>
        <name>ATP</name>
        <dbReference type="ChEBI" id="CHEBI:30616"/>
    </ligand>
</feature>
<feature type="site" description="Interaction with tRNA" evidence="1">
    <location>
        <position position="143"/>
    </location>
</feature>
<feature type="site" description="Interaction with tRNA" evidence="1">
    <location>
        <position position="353"/>
    </location>
</feature>
<feature type="disulfide bond" description="Alternate" evidence="1">
    <location>
        <begin position="118"/>
        <end position="214"/>
    </location>
</feature>
<organism>
    <name type="scientific">Ehrlichia ruminantium (strain Gardel)</name>
    <dbReference type="NCBI Taxonomy" id="302409"/>
    <lineage>
        <taxon>Bacteria</taxon>
        <taxon>Pseudomonadati</taxon>
        <taxon>Pseudomonadota</taxon>
        <taxon>Alphaproteobacteria</taxon>
        <taxon>Rickettsiales</taxon>
        <taxon>Anaplasmataceae</taxon>
        <taxon>Ehrlichia</taxon>
    </lineage>
</organism>
<protein>
    <recommendedName>
        <fullName evidence="1">tRNA-specific 2-thiouridylase MnmA</fullName>
        <ecNumber evidence="1">2.8.1.13</ecNumber>
    </recommendedName>
</protein>
<keyword id="KW-0067">ATP-binding</keyword>
<keyword id="KW-0963">Cytoplasm</keyword>
<keyword id="KW-1015">Disulfide bond</keyword>
<keyword id="KW-0547">Nucleotide-binding</keyword>
<keyword id="KW-0694">RNA-binding</keyword>
<keyword id="KW-0808">Transferase</keyword>
<keyword id="KW-0819">tRNA processing</keyword>
<keyword id="KW-0820">tRNA-binding</keyword>
<accession>Q5FFJ0</accession>
<proteinExistence type="inferred from homology"/>